<protein>
    <recommendedName>
        <fullName evidence="1">Proline--tRNA ligase</fullName>
        <ecNumber evidence="1">6.1.1.15</ecNumber>
    </recommendedName>
    <alternativeName>
        <fullName evidence="1">Prolyl-tRNA synthetase</fullName>
        <shortName evidence="1">ProRS</shortName>
    </alternativeName>
</protein>
<gene>
    <name evidence="1" type="primary">proS</name>
    <name type="ordered locus">Msed_1921</name>
</gene>
<name>SYP_METS5</name>
<dbReference type="EC" id="6.1.1.15" evidence="1"/>
<dbReference type="EMBL" id="CP000682">
    <property type="protein sequence ID" value="ABP96061.1"/>
    <property type="molecule type" value="Genomic_DNA"/>
</dbReference>
<dbReference type="RefSeq" id="WP_012021848.1">
    <property type="nucleotide sequence ID" value="NZ_CP139956.1"/>
</dbReference>
<dbReference type="SMR" id="A4YI09"/>
<dbReference type="STRING" id="399549.Msed_1921"/>
<dbReference type="GeneID" id="97612972"/>
<dbReference type="KEGG" id="mse:Msed_1921"/>
<dbReference type="eggNOG" id="arCOG00402">
    <property type="taxonomic scope" value="Archaea"/>
</dbReference>
<dbReference type="HOGENOM" id="CLU_001882_4_2_2"/>
<dbReference type="Proteomes" id="UP000000242">
    <property type="component" value="Chromosome"/>
</dbReference>
<dbReference type="GO" id="GO:0017101">
    <property type="term" value="C:aminoacyl-tRNA synthetase multienzyme complex"/>
    <property type="evidence" value="ECO:0007669"/>
    <property type="project" value="TreeGrafter"/>
</dbReference>
<dbReference type="GO" id="GO:0005737">
    <property type="term" value="C:cytoplasm"/>
    <property type="evidence" value="ECO:0007669"/>
    <property type="project" value="UniProtKB-SubCell"/>
</dbReference>
<dbReference type="GO" id="GO:0005524">
    <property type="term" value="F:ATP binding"/>
    <property type="evidence" value="ECO:0007669"/>
    <property type="project" value="UniProtKB-UniRule"/>
</dbReference>
<dbReference type="GO" id="GO:0004827">
    <property type="term" value="F:proline-tRNA ligase activity"/>
    <property type="evidence" value="ECO:0007669"/>
    <property type="project" value="UniProtKB-UniRule"/>
</dbReference>
<dbReference type="GO" id="GO:0006433">
    <property type="term" value="P:prolyl-tRNA aminoacylation"/>
    <property type="evidence" value="ECO:0007669"/>
    <property type="project" value="UniProtKB-UniRule"/>
</dbReference>
<dbReference type="CDD" id="cd00862">
    <property type="entry name" value="ProRS_anticodon_zinc"/>
    <property type="match status" value="1"/>
</dbReference>
<dbReference type="CDD" id="cd00778">
    <property type="entry name" value="ProRS_core_arch_euk"/>
    <property type="match status" value="1"/>
</dbReference>
<dbReference type="FunFam" id="3.30.930.10:FF:000037">
    <property type="entry name" value="Proline--tRNA ligase"/>
    <property type="match status" value="1"/>
</dbReference>
<dbReference type="Gene3D" id="3.40.50.800">
    <property type="entry name" value="Anticodon-binding domain"/>
    <property type="match status" value="1"/>
</dbReference>
<dbReference type="Gene3D" id="3.30.930.10">
    <property type="entry name" value="Bira Bifunctional Protein, Domain 2"/>
    <property type="match status" value="1"/>
</dbReference>
<dbReference type="Gene3D" id="3.30.110.30">
    <property type="entry name" value="C-terminal domain of ProRS"/>
    <property type="match status" value="1"/>
</dbReference>
<dbReference type="HAMAP" id="MF_01571">
    <property type="entry name" value="Pro_tRNA_synth_type3"/>
    <property type="match status" value="1"/>
</dbReference>
<dbReference type="InterPro" id="IPR002314">
    <property type="entry name" value="aa-tRNA-synt_IIb"/>
</dbReference>
<dbReference type="InterPro" id="IPR006195">
    <property type="entry name" value="aa-tRNA-synth_II"/>
</dbReference>
<dbReference type="InterPro" id="IPR045864">
    <property type="entry name" value="aa-tRNA-synth_II/BPL/LPL"/>
</dbReference>
<dbReference type="InterPro" id="IPR004154">
    <property type="entry name" value="Anticodon-bd"/>
</dbReference>
<dbReference type="InterPro" id="IPR036621">
    <property type="entry name" value="Anticodon-bd_dom_sf"/>
</dbReference>
<dbReference type="InterPro" id="IPR002316">
    <property type="entry name" value="Pro-tRNA-ligase_IIa"/>
</dbReference>
<dbReference type="InterPro" id="IPR004499">
    <property type="entry name" value="Pro-tRNA-ligase_IIa_arc-type"/>
</dbReference>
<dbReference type="InterPro" id="IPR016061">
    <property type="entry name" value="Pro-tRNA_ligase_II_C"/>
</dbReference>
<dbReference type="InterPro" id="IPR017449">
    <property type="entry name" value="Pro-tRNA_synth_II"/>
</dbReference>
<dbReference type="InterPro" id="IPR033721">
    <property type="entry name" value="ProRS_core_arch_euk"/>
</dbReference>
<dbReference type="NCBIfam" id="TIGR00408">
    <property type="entry name" value="proS_fam_I"/>
    <property type="match status" value="1"/>
</dbReference>
<dbReference type="PANTHER" id="PTHR43382:SF2">
    <property type="entry name" value="BIFUNCTIONAL GLUTAMATE_PROLINE--TRNA LIGASE"/>
    <property type="match status" value="1"/>
</dbReference>
<dbReference type="PANTHER" id="PTHR43382">
    <property type="entry name" value="PROLYL-TRNA SYNTHETASE"/>
    <property type="match status" value="1"/>
</dbReference>
<dbReference type="Pfam" id="PF03129">
    <property type="entry name" value="HGTP_anticodon"/>
    <property type="match status" value="1"/>
</dbReference>
<dbReference type="Pfam" id="PF09180">
    <property type="entry name" value="ProRS-C_1"/>
    <property type="match status" value="1"/>
</dbReference>
<dbReference type="Pfam" id="PF00587">
    <property type="entry name" value="tRNA-synt_2b"/>
    <property type="match status" value="1"/>
</dbReference>
<dbReference type="PRINTS" id="PR01046">
    <property type="entry name" value="TRNASYNTHPRO"/>
</dbReference>
<dbReference type="SMART" id="SM00946">
    <property type="entry name" value="ProRS-C_1"/>
    <property type="match status" value="1"/>
</dbReference>
<dbReference type="SUPFAM" id="SSF64586">
    <property type="entry name" value="C-terminal domain of ProRS"/>
    <property type="match status" value="1"/>
</dbReference>
<dbReference type="SUPFAM" id="SSF52954">
    <property type="entry name" value="Class II aaRS ABD-related"/>
    <property type="match status" value="1"/>
</dbReference>
<dbReference type="SUPFAM" id="SSF55681">
    <property type="entry name" value="Class II aaRS and biotin synthetases"/>
    <property type="match status" value="1"/>
</dbReference>
<dbReference type="PROSITE" id="PS50862">
    <property type="entry name" value="AA_TRNA_LIGASE_II"/>
    <property type="match status" value="1"/>
</dbReference>
<reference key="1">
    <citation type="journal article" date="2008" name="Appl. Environ. Microbiol.">
        <title>The genome sequence of the metal-mobilizing, extremely thermoacidophilic archaeon Metallosphaera sedula provides insights into bioleaching-associated metabolism.</title>
        <authorList>
            <person name="Auernik K.S."/>
            <person name="Maezato Y."/>
            <person name="Blum P.H."/>
            <person name="Kelly R.M."/>
        </authorList>
    </citation>
    <scope>NUCLEOTIDE SEQUENCE [LARGE SCALE GENOMIC DNA]</scope>
    <source>
        <strain>ATCC 51363 / DSM 5348 / JCM 9185 / NBRC 15509 / TH2</strain>
    </source>
</reference>
<keyword id="KW-0030">Aminoacyl-tRNA synthetase</keyword>
<keyword id="KW-0067">ATP-binding</keyword>
<keyword id="KW-0963">Cytoplasm</keyword>
<keyword id="KW-0436">Ligase</keyword>
<keyword id="KW-0547">Nucleotide-binding</keyword>
<keyword id="KW-0648">Protein biosynthesis</keyword>
<keyword id="KW-1185">Reference proteome</keyword>
<accession>A4YI09</accession>
<comment type="function">
    <text evidence="1">Catalyzes the attachment of proline to tRNA(Pro) in a two-step reaction: proline is first activated by ATP to form Pro-AMP and then transferred to the acceptor end of tRNA(Pro).</text>
</comment>
<comment type="catalytic activity">
    <reaction evidence="1">
        <text>tRNA(Pro) + L-proline + ATP = L-prolyl-tRNA(Pro) + AMP + diphosphate</text>
        <dbReference type="Rhea" id="RHEA:14305"/>
        <dbReference type="Rhea" id="RHEA-COMP:9700"/>
        <dbReference type="Rhea" id="RHEA-COMP:9702"/>
        <dbReference type="ChEBI" id="CHEBI:30616"/>
        <dbReference type="ChEBI" id="CHEBI:33019"/>
        <dbReference type="ChEBI" id="CHEBI:60039"/>
        <dbReference type="ChEBI" id="CHEBI:78442"/>
        <dbReference type="ChEBI" id="CHEBI:78532"/>
        <dbReference type="ChEBI" id="CHEBI:456215"/>
        <dbReference type="EC" id="6.1.1.15"/>
    </reaction>
</comment>
<comment type="subunit">
    <text evidence="1">Homodimer.</text>
</comment>
<comment type="subcellular location">
    <subcellularLocation>
        <location evidence="1">Cytoplasm</location>
    </subcellularLocation>
</comment>
<comment type="domain">
    <text evidence="1">Consists of three domains: the N-terminal catalytic domain, the anticodon-binding domain and the C-terminal extension.</text>
</comment>
<comment type="similarity">
    <text evidence="1">Belongs to the class-II aminoacyl-tRNA synthetase family. ProS type 3 subfamily.</text>
</comment>
<sequence>MKISREKWSSNFSEWFDWVISQAEIYDYGRYPVKGSGVWMPYGFKIRQNVTTLIRKLLDETGHEEVLFPLLIPETLLKKEAEHIKGFEKEVFWVTHGGEDELEERFALRPTSEVAITLMESLWIKGYSQLPRKFYQIVSVFRYETKATRPMIRVRELSTFKEAHTVHETFEDAARQVDEAVEIYSKFFDILGIPYLISRRPEWDKFAGAEYTIALDTIMPDGRALQIGTAHHLGQHFTKAMDYKVQRADGSHVHPHQTSYGISDRVIATVISINGDDHGPILPPVVAPIEGVIIPIPGKSEEDTEKINKYAMEVESVLKNSGIRVALDASEDKTPGEKYYIWELKGVPIRIEIGPRELNSGTAFLKRRDTLEGKSVKREELVKEFRNLEDQISADLRKRAWEQFKERVKRFQSLDEAKKFLENRGGIAEVPWCGQDSCGLKIEEQVQARVLGTPLKPEPSGNCVVCGKPSTNILRIAKTY</sequence>
<organism>
    <name type="scientific">Metallosphaera sedula (strain ATCC 51363 / DSM 5348 / JCM 9185 / NBRC 15509 / TH2)</name>
    <dbReference type="NCBI Taxonomy" id="399549"/>
    <lineage>
        <taxon>Archaea</taxon>
        <taxon>Thermoproteota</taxon>
        <taxon>Thermoprotei</taxon>
        <taxon>Sulfolobales</taxon>
        <taxon>Sulfolobaceae</taxon>
        <taxon>Metallosphaera</taxon>
    </lineage>
</organism>
<evidence type="ECO:0000255" key="1">
    <source>
        <dbReference type="HAMAP-Rule" id="MF_01571"/>
    </source>
</evidence>
<feature type="chain" id="PRO_1000073599" description="Proline--tRNA ligase">
    <location>
        <begin position="1"/>
        <end position="480"/>
    </location>
</feature>
<proteinExistence type="inferred from homology"/>